<name>ARNF_SALSV</name>
<protein>
    <recommendedName>
        <fullName evidence="1">Probable 4-amino-4-deoxy-L-arabinose-phosphoundecaprenol flippase subunit ArnF</fullName>
        <shortName evidence="1">L-Ara4N-phosphoundecaprenol flippase subunit ArnF</shortName>
    </recommendedName>
    <alternativeName>
        <fullName evidence="1">Undecaprenyl phosphate-aminoarabinose flippase subunit ArnF</fullName>
    </alternativeName>
</protein>
<gene>
    <name evidence="1" type="primary">arnF</name>
    <name type="ordered locus">SeSA_A2531</name>
</gene>
<comment type="function">
    <text evidence="1">Translocates 4-amino-4-deoxy-L-arabinose-phosphoundecaprenol (alpha-L-Ara4N-phosphoundecaprenol) from the cytoplasmic to the periplasmic side of the inner membrane.</text>
</comment>
<comment type="pathway">
    <text evidence="1">Bacterial outer membrane biogenesis; lipopolysaccharide biosynthesis.</text>
</comment>
<comment type="subunit">
    <text evidence="1">Heterodimer of ArnE and ArnF.</text>
</comment>
<comment type="subcellular location">
    <subcellularLocation>
        <location evidence="1">Cell inner membrane</location>
        <topology evidence="1">Multi-pass membrane protein</topology>
    </subcellularLocation>
</comment>
<comment type="similarity">
    <text evidence="1">Belongs to the ArnF family.</text>
</comment>
<keyword id="KW-0997">Cell inner membrane</keyword>
<keyword id="KW-1003">Cell membrane</keyword>
<keyword id="KW-0441">Lipid A biosynthesis</keyword>
<keyword id="KW-0444">Lipid biosynthesis</keyword>
<keyword id="KW-0443">Lipid metabolism</keyword>
<keyword id="KW-0448">Lipopolysaccharide biosynthesis</keyword>
<keyword id="KW-0472">Membrane</keyword>
<keyword id="KW-0812">Transmembrane</keyword>
<keyword id="KW-1133">Transmembrane helix</keyword>
<keyword id="KW-0813">Transport</keyword>
<reference key="1">
    <citation type="journal article" date="2011" name="J. Bacteriol.">
        <title>Comparative genomics of 28 Salmonella enterica isolates: evidence for CRISPR-mediated adaptive sublineage evolution.</title>
        <authorList>
            <person name="Fricke W.F."/>
            <person name="Mammel M.K."/>
            <person name="McDermott P.F."/>
            <person name="Tartera C."/>
            <person name="White D.G."/>
            <person name="Leclerc J.E."/>
            <person name="Ravel J."/>
            <person name="Cebula T.A."/>
        </authorList>
    </citation>
    <scope>NUCLEOTIDE SEQUENCE [LARGE SCALE GENOMIC DNA]</scope>
    <source>
        <strain>CVM19633</strain>
    </source>
</reference>
<accession>B4TPI6</accession>
<organism>
    <name type="scientific">Salmonella schwarzengrund (strain CVM19633)</name>
    <dbReference type="NCBI Taxonomy" id="439843"/>
    <lineage>
        <taxon>Bacteria</taxon>
        <taxon>Pseudomonadati</taxon>
        <taxon>Pseudomonadota</taxon>
        <taxon>Gammaproteobacteria</taxon>
        <taxon>Enterobacterales</taxon>
        <taxon>Enterobacteriaceae</taxon>
        <taxon>Salmonella</taxon>
    </lineage>
</organism>
<feature type="chain" id="PRO_1000128671" description="Probable 4-amino-4-deoxy-L-arabinose-phosphoundecaprenol flippase subunit ArnF">
    <location>
        <begin position="1"/>
        <end position="125"/>
    </location>
</feature>
<feature type="topological domain" description="Cytoplasmic" evidence="1">
    <location>
        <begin position="1"/>
        <end position="2"/>
    </location>
</feature>
<feature type="transmembrane region" description="Helical" evidence="1">
    <location>
        <begin position="3"/>
        <end position="23"/>
    </location>
</feature>
<feature type="topological domain" description="Periplasmic" evidence="1">
    <location>
        <begin position="24"/>
        <end position="33"/>
    </location>
</feature>
<feature type="transmembrane region" description="Helical" evidence="1">
    <location>
        <begin position="34"/>
        <end position="54"/>
    </location>
</feature>
<feature type="topological domain" description="Cytoplasmic" evidence="1">
    <location>
        <begin position="55"/>
        <end position="76"/>
    </location>
</feature>
<feature type="transmembrane region" description="Helical" evidence="1">
    <location>
        <begin position="77"/>
        <end position="97"/>
    </location>
</feature>
<feature type="topological domain" description="Periplasmic" evidence="1">
    <location>
        <begin position="98"/>
        <end position="100"/>
    </location>
</feature>
<feature type="transmembrane region" description="Helical" evidence="1">
    <location>
        <begin position="101"/>
        <end position="121"/>
    </location>
</feature>
<feature type="topological domain" description="Cytoplasmic" evidence="1">
    <location>
        <begin position="122"/>
        <end position="125"/>
    </location>
</feature>
<sequence>MGVMWGLISVAIASLAQLSLGFAMMRLPSIAHPLAFISGLGAFNAATLALFAGLAGYLVSVFCWQKTLHTLALSKAYALLSLSYVLVWVASMLLPGLQGAFSLKAMLGVLCIMAGVMLIFLPARS</sequence>
<dbReference type="EMBL" id="CP001127">
    <property type="protein sequence ID" value="ACF89344.1"/>
    <property type="molecule type" value="Genomic_DNA"/>
</dbReference>
<dbReference type="RefSeq" id="WP_000538694.1">
    <property type="nucleotide sequence ID" value="NC_011094.1"/>
</dbReference>
<dbReference type="KEGG" id="sew:SeSA_A2531"/>
<dbReference type="HOGENOM" id="CLU_131462_1_0_6"/>
<dbReference type="UniPathway" id="UPA00030"/>
<dbReference type="Proteomes" id="UP000001865">
    <property type="component" value="Chromosome"/>
</dbReference>
<dbReference type="GO" id="GO:0005886">
    <property type="term" value="C:plasma membrane"/>
    <property type="evidence" value="ECO:0007669"/>
    <property type="project" value="UniProtKB-SubCell"/>
</dbReference>
<dbReference type="GO" id="GO:1901505">
    <property type="term" value="F:carbohydrate derivative transmembrane transporter activity"/>
    <property type="evidence" value="ECO:0007669"/>
    <property type="project" value="InterPro"/>
</dbReference>
<dbReference type="GO" id="GO:0009245">
    <property type="term" value="P:lipid A biosynthetic process"/>
    <property type="evidence" value="ECO:0007669"/>
    <property type="project" value="UniProtKB-UniRule"/>
</dbReference>
<dbReference type="GO" id="GO:0009103">
    <property type="term" value="P:lipopolysaccharide biosynthetic process"/>
    <property type="evidence" value="ECO:0007669"/>
    <property type="project" value="UniProtKB-UniRule"/>
</dbReference>
<dbReference type="Gene3D" id="1.10.3730.20">
    <property type="match status" value="1"/>
</dbReference>
<dbReference type="HAMAP" id="MF_00538">
    <property type="entry name" value="Flippase_ArnF"/>
    <property type="match status" value="1"/>
</dbReference>
<dbReference type="InterPro" id="IPR022832">
    <property type="entry name" value="Flippase_ArnF"/>
</dbReference>
<dbReference type="InterPro" id="IPR000390">
    <property type="entry name" value="Small_drug/metabolite_transptr"/>
</dbReference>
<dbReference type="NCBIfam" id="NF002816">
    <property type="entry name" value="PRK02971.1-2"/>
    <property type="match status" value="1"/>
</dbReference>
<dbReference type="PANTHER" id="PTHR30561:SF9">
    <property type="entry name" value="4-AMINO-4-DEOXY-L-ARABINOSE-PHOSPHOUNDECAPRENOL FLIPPASE SUBUNIT ARNF-RELATED"/>
    <property type="match status" value="1"/>
</dbReference>
<dbReference type="PANTHER" id="PTHR30561">
    <property type="entry name" value="SMR FAMILY PROTON-DEPENDENT DRUG EFFLUX TRANSPORTER SUGE"/>
    <property type="match status" value="1"/>
</dbReference>
<proteinExistence type="inferred from homology"/>
<evidence type="ECO:0000255" key="1">
    <source>
        <dbReference type="HAMAP-Rule" id="MF_00538"/>
    </source>
</evidence>